<organism>
    <name type="scientific">Salmonella dublin (strain CT_02021853)</name>
    <dbReference type="NCBI Taxonomy" id="439851"/>
    <lineage>
        <taxon>Bacteria</taxon>
        <taxon>Pseudomonadati</taxon>
        <taxon>Pseudomonadota</taxon>
        <taxon>Gammaproteobacteria</taxon>
        <taxon>Enterobacterales</taxon>
        <taxon>Enterobacteriaceae</taxon>
        <taxon>Salmonella</taxon>
    </lineage>
</organism>
<keyword id="KW-0963">Cytoplasm</keyword>
<keyword id="KW-0251">Elongation factor</keyword>
<keyword id="KW-0342">GTP-binding</keyword>
<keyword id="KW-0547">Nucleotide-binding</keyword>
<keyword id="KW-0648">Protein biosynthesis</keyword>
<dbReference type="EMBL" id="CP001144">
    <property type="protein sequence ID" value="ACH75494.1"/>
    <property type="molecule type" value="Genomic_DNA"/>
</dbReference>
<dbReference type="RefSeq" id="WP_000124693.1">
    <property type="nucleotide sequence ID" value="NC_011205.1"/>
</dbReference>
<dbReference type="SMR" id="B5FJM0"/>
<dbReference type="KEGG" id="sed:SeD_A3814"/>
<dbReference type="HOGENOM" id="CLU_002794_4_1_6"/>
<dbReference type="Proteomes" id="UP000008322">
    <property type="component" value="Chromosome"/>
</dbReference>
<dbReference type="GO" id="GO:0005737">
    <property type="term" value="C:cytoplasm"/>
    <property type="evidence" value="ECO:0007669"/>
    <property type="project" value="UniProtKB-SubCell"/>
</dbReference>
<dbReference type="GO" id="GO:0005525">
    <property type="term" value="F:GTP binding"/>
    <property type="evidence" value="ECO:0007669"/>
    <property type="project" value="UniProtKB-UniRule"/>
</dbReference>
<dbReference type="GO" id="GO:0003924">
    <property type="term" value="F:GTPase activity"/>
    <property type="evidence" value="ECO:0007669"/>
    <property type="project" value="InterPro"/>
</dbReference>
<dbReference type="GO" id="GO:0097216">
    <property type="term" value="F:guanosine tetraphosphate binding"/>
    <property type="evidence" value="ECO:0007669"/>
    <property type="project" value="UniProtKB-ARBA"/>
</dbReference>
<dbReference type="GO" id="GO:0003746">
    <property type="term" value="F:translation elongation factor activity"/>
    <property type="evidence" value="ECO:0007669"/>
    <property type="project" value="UniProtKB-UniRule"/>
</dbReference>
<dbReference type="GO" id="GO:0032790">
    <property type="term" value="P:ribosome disassembly"/>
    <property type="evidence" value="ECO:0007669"/>
    <property type="project" value="TreeGrafter"/>
</dbReference>
<dbReference type="CDD" id="cd01886">
    <property type="entry name" value="EF-G"/>
    <property type="match status" value="1"/>
</dbReference>
<dbReference type="CDD" id="cd16262">
    <property type="entry name" value="EFG_III"/>
    <property type="match status" value="1"/>
</dbReference>
<dbReference type="CDD" id="cd01434">
    <property type="entry name" value="EFG_mtEFG1_IV"/>
    <property type="match status" value="1"/>
</dbReference>
<dbReference type="CDD" id="cd03713">
    <property type="entry name" value="EFG_mtEFG_C"/>
    <property type="match status" value="1"/>
</dbReference>
<dbReference type="CDD" id="cd04088">
    <property type="entry name" value="EFG_mtEFG_II"/>
    <property type="match status" value="1"/>
</dbReference>
<dbReference type="FunFam" id="2.40.30.10:FF:000006">
    <property type="entry name" value="Elongation factor G"/>
    <property type="match status" value="1"/>
</dbReference>
<dbReference type="FunFam" id="3.30.230.10:FF:000003">
    <property type="entry name" value="Elongation factor G"/>
    <property type="match status" value="1"/>
</dbReference>
<dbReference type="FunFam" id="3.30.70.240:FF:000001">
    <property type="entry name" value="Elongation factor G"/>
    <property type="match status" value="1"/>
</dbReference>
<dbReference type="FunFam" id="3.30.70.870:FF:000001">
    <property type="entry name" value="Elongation factor G"/>
    <property type="match status" value="1"/>
</dbReference>
<dbReference type="FunFam" id="3.40.50.300:FF:000029">
    <property type="entry name" value="Elongation factor G"/>
    <property type="match status" value="1"/>
</dbReference>
<dbReference type="Gene3D" id="3.30.230.10">
    <property type="match status" value="1"/>
</dbReference>
<dbReference type="Gene3D" id="3.30.70.240">
    <property type="match status" value="1"/>
</dbReference>
<dbReference type="Gene3D" id="3.30.70.870">
    <property type="entry name" value="Elongation Factor G (Translational Gtpase), domain 3"/>
    <property type="match status" value="1"/>
</dbReference>
<dbReference type="Gene3D" id="3.40.50.300">
    <property type="entry name" value="P-loop containing nucleotide triphosphate hydrolases"/>
    <property type="match status" value="1"/>
</dbReference>
<dbReference type="Gene3D" id="2.40.30.10">
    <property type="entry name" value="Translation factors"/>
    <property type="match status" value="1"/>
</dbReference>
<dbReference type="HAMAP" id="MF_00054_B">
    <property type="entry name" value="EF_G_EF_2_B"/>
    <property type="match status" value="1"/>
</dbReference>
<dbReference type="InterPro" id="IPR041095">
    <property type="entry name" value="EFG_II"/>
</dbReference>
<dbReference type="InterPro" id="IPR009022">
    <property type="entry name" value="EFG_III"/>
</dbReference>
<dbReference type="InterPro" id="IPR035647">
    <property type="entry name" value="EFG_III/V"/>
</dbReference>
<dbReference type="InterPro" id="IPR047872">
    <property type="entry name" value="EFG_IV"/>
</dbReference>
<dbReference type="InterPro" id="IPR035649">
    <property type="entry name" value="EFG_V"/>
</dbReference>
<dbReference type="InterPro" id="IPR000640">
    <property type="entry name" value="EFG_V-like"/>
</dbReference>
<dbReference type="InterPro" id="IPR004161">
    <property type="entry name" value="EFTu-like_2"/>
</dbReference>
<dbReference type="InterPro" id="IPR031157">
    <property type="entry name" value="G_TR_CS"/>
</dbReference>
<dbReference type="InterPro" id="IPR027417">
    <property type="entry name" value="P-loop_NTPase"/>
</dbReference>
<dbReference type="InterPro" id="IPR020568">
    <property type="entry name" value="Ribosomal_Su5_D2-typ_SF"/>
</dbReference>
<dbReference type="InterPro" id="IPR014721">
    <property type="entry name" value="Ribsml_uS5_D2-typ_fold_subgr"/>
</dbReference>
<dbReference type="InterPro" id="IPR005225">
    <property type="entry name" value="Small_GTP-bd"/>
</dbReference>
<dbReference type="InterPro" id="IPR000795">
    <property type="entry name" value="T_Tr_GTP-bd_dom"/>
</dbReference>
<dbReference type="InterPro" id="IPR009000">
    <property type="entry name" value="Transl_B-barrel_sf"/>
</dbReference>
<dbReference type="InterPro" id="IPR004540">
    <property type="entry name" value="Transl_elong_EFG/EF2"/>
</dbReference>
<dbReference type="InterPro" id="IPR005517">
    <property type="entry name" value="Transl_elong_EFG/EF2_IV"/>
</dbReference>
<dbReference type="NCBIfam" id="TIGR00484">
    <property type="entry name" value="EF-G"/>
    <property type="match status" value="1"/>
</dbReference>
<dbReference type="NCBIfam" id="NF009381">
    <property type="entry name" value="PRK12740.1-5"/>
    <property type="match status" value="1"/>
</dbReference>
<dbReference type="NCBIfam" id="TIGR00231">
    <property type="entry name" value="small_GTP"/>
    <property type="match status" value="1"/>
</dbReference>
<dbReference type="PANTHER" id="PTHR43261:SF1">
    <property type="entry name" value="RIBOSOME-RELEASING FACTOR 2, MITOCHONDRIAL"/>
    <property type="match status" value="1"/>
</dbReference>
<dbReference type="PANTHER" id="PTHR43261">
    <property type="entry name" value="TRANSLATION ELONGATION FACTOR G-RELATED"/>
    <property type="match status" value="1"/>
</dbReference>
<dbReference type="Pfam" id="PF00679">
    <property type="entry name" value="EFG_C"/>
    <property type="match status" value="1"/>
</dbReference>
<dbReference type="Pfam" id="PF14492">
    <property type="entry name" value="EFG_III"/>
    <property type="match status" value="1"/>
</dbReference>
<dbReference type="Pfam" id="PF03764">
    <property type="entry name" value="EFG_IV"/>
    <property type="match status" value="1"/>
</dbReference>
<dbReference type="Pfam" id="PF00009">
    <property type="entry name" value="GTP_EFTU"/>
    <property type="match status" value="1"/>
</dbReference>
<dbReference type="Pfam" id="PF03144">
    <property type="entry name" value="GTP_EFTU_D2"/>
    <property type="match status" value="1"/>
</dbReference>
<dbReference type="PRINTS" id="PR00315">
    <property type="entry name" value="ELONGATNFCT"/>
</dbReference>
<dbReference type="SMART" id="SM00838">
    <property type="entry name" value="EFG_C"/>
    <property type="match status" value="1"/>
</dbReference>
<dbReference type="SMART" id="SM00889">
    <property type="entry name" value="EFG_IV"/>
    <property type="match status" value="1"/>
</dbReference>
<dbReference type="SUPFAM" id="SSF54980">
    <property type="entry name" value="EF-G C-terminal domain-like"/>
    <property type="match status" value="2"/>
</dbReference>
<dbReference type="SUPFAM" id="SSF52540">
    <property type="entry name" value="P-loop containing nucleoside triphosphate hydrolases"/>
    <property type="match status" value="1"/>
</dbReference>
<dbReference type="SUPFAM" id="SSF54211">
    <property type="entry name" value="Ribosomal protein S5 domain 2-like"/>
    <property type="match status" value="1"/>
</dbReference>
<dbReference type="SUPFAM" id="SSF50447">
    <property type="entry name" value="Translation proteins"/>
    <property type="match status" value="1"/>
</dbReference>
<dbReference type="PROSITE" id="PS00301">
    <property type="entry name" value="G_TR_1"/>
    <property type="match status" value="1"/>
</dbReference>
<dbReference type="PROSITE" id="PS51722">
    <property type="entry name" value="G_TR_2"/>
    <property type="match status" value="1"/>
</dbReference>
<reference key="1">
    <citation type="journal article" date="2011" name="J. Bacteriol.">
        <title>Comparative genomics of 28 Salmonella enterica isolates: evidence for CRISPR-mediated adaptive sublineage evolution.</title>
        <authorList>
            <person name="Fricke W.F."/>
            <person name="Mammel M.K."/>
            <person name="McDermott P.F."/>
            <person name="Tartera C."/>
            <person name="White D.G."/>
            <person name="Leclerc J.E."/>
            <person name="Ravel J."/>
            <person name="Cebula T.A."/>
        </authorList>
    </citation>
    <scope>NUCLEOTIDE SEQUENCE [LARGE SCALE GENOMIC DNA]</scope>
    <source>
        <strain>CT_02021853</strain>
    </source>
</reference>
<name>EFG_SALDC</name>
<protein>
    <recommendedName>
        <fullName evidence="1">Elongation factor G</fullName>
        <shortName evidence="1">EF-G</shortName>
    </recommendedName>
</protein>
<evidence type="ECO:0000255" key="1">
    <source>
        <dbReference type="HAMAP-Rule" id="MF_00054"/>
    </source>
</evidence>
<comment type="function">
    <text evidence="1">Catalyzes the GTP-dependent ribosomal translocation step during translation elongation. During this step, the ribosome changes from the pre-translocational (PRE) to the post-translocational (POST) state as the newly formed A-site-bound peptidyl-tRNA and P-site-bound deacylated tRNA move to the P and E sites, respectively. Catalyzes the coordinated movement of the two tRNA molecules, the mRNA and conformational changes in the ribosome.</text>
</comment>
<comment type="subcellular location">
    <subcellularLocation>
        <location evidence="1">Cytoplasm</location>
    </subcellularLocation>
</comment>
<comment type="similarity">
    <text evidence="1">Belongs to the TRAFAC class translation factor GTPase superfamily. Classic translation factor GTPase family. EF-G/EF-2 subfamily.</text>
</comment>
<feature type="chain" id="PRO_1000091755" description="Elongation factor G">
    <location>
        <begin position="1"/>
        <end position="704"/>
    </location>
</feature>
<feature type="domain" description="tr-type G">
    <location>
        <begin position="8"/>
        <end position="290"/>
    </location>
</feature>
<feature type="binding site" evidence="1">
    <location>
        <begin position="17"/>
        <end position="24"/>
    </location>
    <ligand>
        <name>GTP</name>
        <dbReference type="ChEBI" id="CHEBI:37565"/>
    </ligand>
</feature>
<feature type="binding site" evidence="1">
    <location>
        <begin position="88"/>
        <end position="92"/>
    </location>
    <ligand>
        <name>GTP</name>
        <dbReference type="ChEBI" id="CHEBI:37565"/>
    </ligand>
</feature>
<feature type="binding site" evidence="1">
    <location>
        <begin position="142"/>
        <end position="145"/>
    </location>
    <ligand>
        <name>GTP</name>
        <dbReference type="ChEBI" id="CHEBI:37565"/>
    </ligand>
</feature>
<gene>
    <name evidence="1" type="primary">fusA</name>
    <name type="ordered locus">SeD_A3814</name>
</gene>
<accession>B5FJM0</accession>
<proteinExistence type="inferred from homology"/>
<sequence length="704" mass="77599">MARTTPIARYRNIGISAHIDAGKTTTTERILFYTGVNHKIGEVHDGAATMDWMEQEQERGITITSAATTAFWSGMAKQYEPHRINIIDTPGHVDFTIEVERSMRVLDGAVMVYCAVGGVQPQSETVWRQANKYKVPRIAFVNKMDRMGANFLKVVGQIKTRLGANPVPLQLAIGAEEGFTGVVDLVKMKAINWNDADQGVTFEYEDIPADMQDLANEWHQNLIESAAEASEELMEKYLGGEELTEEEIKQALRQRVLNNEIILVTCGSAFKNKGVQAMLDAVIDYLPSPVDVPAINGILDDGKDTPAERHASDDEPFSALAFKIATDPFVGNLTFFRVYSGVVNSGDTVLNSVKTARERFGRIVQMHANKREEIKEVRAGDIAAAIGLKDVTTGDTLCDPENPIILERMEFPEPVISIAVEPKTKADQEKMGLALGRLAKEDPSFRVWTDEESNQTIIAGMGELHLDIIVDRMKREFNVEANVGKPQVAYREAIRAKVTDIEGKHAKQSGGRGQYGHVVIDMYPLEPGSNPKGYEFINDIKGGVIPGEYIPAVDKGIQEQLKSGPLAGYPVVDLGVRLHFGSYHDVDSSELAFKLAASIAFKEGFKKAKPVLLEPIMKVEVETPEENTGDVIGDLSRRRGMLKGQESEVTGVKIHAEVPLSEMFGYATQLRSLTKGRASYTMEFLKYDDAPNNVAQAVIEARGK</sequence>